<protein>
    <recommendedName>
        <fullName evidence="3">Omega-conotoxin RsXXVIA</fullName>
    </recommendedName>
    <alternativeName>
        <fullName evidence="2">RsXXIVA</fullName>
    </alternativeName>
</protein>
<evidence type="ECO:0000269" key="1">
    <source>
    </source>
</evidence>
<evidence type="ECO:0000303" key="2">
    <source>
    </source>
</evidence>
<evidence type="ECO:0000305" key="3"/>
<evidence type="ECO:0000305" key="4">
    <source>
    </source>
</evidence>
<accession>P0DL31</accession>
<feature type="chain" id="PRO_0000422884" description="Omega-conotoxin RsXXVIA" evidence="1">
    <location>
        <begin position="1"/>
        <end position="40"/>
    </location>
</feature>
<dbReference type="SMR" id="P0DL31"/>
<dbReference type="GO" id="GO:0005576">
    <property type="term" value="C:extracellular region"/>
    <property type="evidence" value="ECO:0007669"/>
    <property type="project" value="UniProtKB-SubCell"/>
</dbReference>
<dbReference type="GO" id="GO:0005246">
    <property type="term" value="F:calcium channel regulator activity"/>
    <property type="evidence" value="ECO:0007669"/>
    <property type="project" value="UniProtKB-KW"/>
</dbReference>
<dbReference type="GO" id="GO:0090729">
    <property type="term" value="F:toxin activity"/>
    <property type="evidence" value="ECO:0007669"/>
    <property type="project" value="UniProtKB-KW"/>
</dbReference>
<proteinExistence type="evidence at protein level"/>
<comment type="function">
    <text evidence="1">Omega-conotoxins act at presynaptic membranes, they bind and block voltage-gated calcium channels (Cav). This toxin inhibits rat Cav2.2/CACNA1B calcium channels in a dose-dependent manner (EC(50)=2.8 uM), whose effect is partially reversed after washing. In vivo, when injected into mice, it shows both an analgesic effect in acute thermal pain at 30 and 45 minutes post-injection and an anti-nociceptive effect in a formalin chronic pain test.</text>
</comment>
<comment type="subcellular location">
    <subcellularLocation>
        <location evidence="1">Secreted</location>
    </subcellularLocation>
</comment>
<comment type="tissue specificity">
    <text evidence="4">Expressed by the venom duct.</text>
</comment>
<comment type="domain">
    <text evidence="3">The cysteine framework is XXVI (C-C-C-C-CC-CC).</text>
</comment>
<comment type="PTM">
    <text evidence="3">Contains 4 disulfide bonds.</text>
</comment>
<comment type="miscellaneous">
    <text evidence="3">The framework of this peptide is described as framework XXIV but this framework name was already attributed to another cysteine pattern (see AC J7JU64). The framework is therefore renamed to the lowest available number, XXVI, and the peptide is consequently renamed RsXXVIA.</text>
</comment>
<keyword id="KW-0108">Calcium channel impairing toxin</keyword>
<keyword id="KW-0165">Cleavage on pair of basic residues</keyword>
<keyword id="KW-0903">Direct protein sequencing</keyword>
<keyword id="KW-1015">Disulfide bond</keyword>
<keyword id="KW-0872">Ion channel impairing toxin</keyword>
<keyword id="KW-0528">Neurotoxin</keyword>
<keyword id="KW-0964">Secreted</keyword>
<keyword id="KW-0800">Toxin</keyword>
<keyword id="KW-1218">Voltage-gated calcium channel impairing toxin</keyword>
<reference key="1">
    <citation type="journal article" date="2013" name="Mar. Drugs">
        <title>A Conus regularis conotoxin with a novel eight-cysteine framework inhibits CaV2.2 channels and displays an anti-nociceptive activity.</title>
        <authorList>
            <person name="Bernaldez J."/>
            <person name="Roman-Gonzalez S.A."/>
            <person name="Martinez O."/>
            <person name="Jimenez S."/>
            <person name="Vivas O."/>
            <person name="Arenas I."/>
            <person name="Corzo G."/>
            <person name="Arreguin R."/>
            <person name="Garcia D.E."/>
            <person name="Possani L.D."/>
            <person name="Licea A."/>
        </authorList>
    </citation>
    <scope>PROTEIN SEQUENCE</scope>
    <scope>FUNCTION</scope>
    <scope>BIOASSAY</scope>
    <scope>IDENTIFICATION BY MASS SPECTROMETRY</scope>
    <scope>SUBCELLULAR LOCATION</scope>
    <source>
        <tissue>Venom</tissue>
    </source>
</reference>
<name>CXQA_CONRG</name>
<organism>
    <name type="scientific">Conus regularis</name>
    <name type="common">Regular cone</name>
    <dbReference type="NCBI Taxonomy" id="1333719"/>
    <lineage>
        <taxon>Eukaryota</taxon>
        <taxon>Metazoa</taxon>
        <taxon>Spiralia</taxon>
        <taxon>Lophotrochozoa</taxon>
        <taxon>Mollusca</taxon>
        <taxon>Gastropoda</taxon>
        <taxon>Caenogastropoda</taxon>
        <taxon>Neogastropoda</taxon>
        <taxon>Conoidea</taxon>
        <taxon>Conidae</taxon>
        <taxon>Conus</taxon>
        <taxon>Dauciconus</taxon>
    </lineage>
</organism>
<sequence length="40" mass="4121">CKGQSCSSCSTKEFCLSKGSRLMYDCCTGSCCGVKTAGVT</sequence>